<dbReference type="EMBL" id="CP001598">
    <property type="protein sequence ID" value="ACQ48599.1"/>
    <property type="molecule type" value="Genomic_DNA"/>
</dbReference>
<dbReference type="RefSeq" id="WP_000135311.1">
    <property type="nucleotide sequence ID" value="NC_012659.1"/>
</dbReference>
<dbReference type="SMR" id="C3PBC1"/>
<dbReference type="GeneID" id="83638371"/>
<dbReference type="KEGG" id="bai:BAA_4919"/>
<dbReference type="HOGENOM" id="CLU_092403_0_1_9"/>
<dbReference type="GO" id="GO:0015935">
    <property type="term" value="C:small ribosomal subunit"/>
    <property type="evidence" value="ECO:0007669"/>
    <property type="project" value="InterPro"/>
</dbReference>
<dbReference type="GO" id="GO:0019843">
    <property type="term" value="F:rRNA binding"/>
    <property type="evidence" value="ECO:0007669"/>
    <property type="project" value="UniProtKB-UniRule"/>
</dbReference>
<dbReference type="GO" id="GO:0003735">
    <property type="term" value="F:structural constituent of ribosome"/>
    <property type="evidence" value="ECO:0007669"/>
    <property type="project" value="InterPro"/>
</dbReference>
<dbReference type="GO" id="GO:0042274">
    <property type="term" value="P:ribosomal small subunit biogenesis"/>
    <property type="evidence" value="ECO:0007669"/>
    <property type="project" value="TreeGrafter"/>
</dbReference>
<dbReference type="GO" id="GO:0006412">
    <property type="term" value="P:translation"/>
    <property type="evidence" value="ECO:0007669"/>
    <property type="project" value="UniProtKB-UniRule"/>
</dbReference>
<dbReference type="CDD" id="cd00165">
    <property type="entry name" value="S4"/>
    <property type="match status" value="1"/>
</dbReference>
<dbReference type="FunFam" id="1.10.1050.10:FF:000001">
    <property type="entry name" value="30S ribosomal protein S4"/>
    <property type="match status" value="1"/>
</dbReference>
<dbReference type="FunFam" id="3.10.290.10:FF:000001">
    <property type="entry name" value="30S ribosomal protein S4"/>
    <property type="match status" value="1"/>
</dbReference>
<dbReference type="Gene3D" id="1.10.1050.10">
    <property type="entry name" value="Ribosomal Protein S4 Delta 41, Chain A, domain 1"/>
    <property type="match status" value="1"/>
</dbReference>
<dbReference type="Gene3D" id="3.10.290.10">
    <property type="entry name" value="RNA-binding S4 domain"/>
    <property type="match status" value="1"/>
</dbReference>
<dbReference type="HAMAP" id="MF_01306_B">
    <property type="entry name" value="Ribosomal_uS4_B"/>
    <property type="match status" value="1"/>
</dbReference>
<dbReference type="InterPro" id="IPR022801">
    <property type="entry name" value="Ribosomal_uS4"/>
</dbReference>
<dbReference type="InterPro" id="IPR005709">
    <property type="entry name" value="Ribosomal_uS4_bac-type"/>
</dbReference>
<dbReference type="InterPro" id="IPR018079">
    <property type="entry name" value="Ribosomal_uS4_CS"/>
</dbReference>
<dbReference type="InterPro" id="IPR001912">
    <property type="entry name" value="Ribosomal_uS4_N"/>
</dbReference>
<dbReference type="InterPro" id="IPR002942">
    <property type="entry name" value="S4_RNA-bd"/>
</dbReference>
<dbReference type="InterPro" id="IPR036986">
    <property type="entry name" value="S4_RNA-bd_sf"/>
</dbReference>
<dbReference type="NCBIfam" id="NF003717">
    <property type="entry name" value="PRK05327.1"/>
    <property type="match status" value="1"/>
</dbReference>
<dbReference type="NCBIfam" id="TIGR01017">
    <property type="entry name" value="rpsD_bact"/>
    <property type="match status" value="1"/>
</dbReference>
<dbReference type="PANTHER" id="PTHR11831">
    <property type="entry name" value="30S 40S RIBOSOMAL PROTEIN"/>
    <property type="match status" value="1"/>
</dbReference>
<dbReference type="PANTHER" id="PTHR11831:SF4">
    <property type="entry name" value="SMALL RIBOSOMAL SUBUNIT PROTEIN US4M"/>
    <property type="match status" value="1"/>
</dbReference>
<dbReference type="Pfam" id="PF00163">
    <property type="entry name" value="Ribosomal_S4"/>
    <property type="match status" value="1"/>
</dbReference>
<dbReference type="Pfam" id="PF01479">
    <property type="entry name" value="S4"/>
    <property type="match status" value="1"/>
</dbReference>
<dbReference type="SMART" id="SM01390">
    <property type="entry name" value="Ribosomal_S4"/>
    <property type="match status" value="1"/>
</dbReference>
<dbReference type="SMART" id="SM00363">
    <property type="entry name" value="S4"/>
    <property type="match status" value="1"/>
</dbReference>
<dbReference type="SUPFAM" id="SSF55174">
    <property type="entry name" value="Alpha-L RNA-binding motif"/>
    <property type="match status" value="1"/>
</dbReference>
<dbReference type="PROSITE" id="PS00632">
    <property type="entry name" value="RIBOSOMAL_S4"/>
    <property type="match status" value="1"/>
</dbReference>
<dbReference type="PROSITE" id="PS50889">
    <property type="entry name" value="S4"/>
    <property type="match status" value="1"/>
</dbReference>
<protein>
    <recommendedName>
        <fullName evidence="1">Small ribosomal subunit protein uS4</fullName>
    </recommendedName>
    <alternativeName>
        <fullName evidence="3">30S ribosomal protein S4</fullName>
    </alternativeName>
</protein>
<feature type="chain" id="PRO_1000165380" description="Small ribosomal subunit protein uS4">
    <location>
        <begin position="1"/>
        <end position="200"/>
    </location>
</feature>
<feature type="domain" description="S4 RNA-binding" evidence="1">
    <location>
        <begin position="92"/>
        <end position="152"/>
    </location>
</feature>
<feature type="region of interest" description="Disordered" evidence="2">
    <location>
        <begin position="22"/>
        <end position="42"/>
    </location>
</feature>
<proteinExistence type="inferred from homology"/>
<keyword id="KW-0687">Ribonucleoprotein</keyword>
<keyword id="KW-0689">Ribosomal protein</keyword>
<keyword id="KW-0694">RNA-binding</keyword>
<keyword id="KW-0699">rRNA-binding</keyword>
<reference key="1">
    <citation type="submission" date="2009-04" db="EMBL/GenBank/DDBJ databases">
        <title>Genome sequence of Bacillus anthracis A0248.</title>
        <authorList>
            <person name="Dodson R.J."/>
            <person name="Munk A.C."/>
            <person name="Bruce D."/>
            <person name="Detter C."/>
            <person name="Tapia R."/>
            <person name="Sutton G."/>
            <person name="Sims D."/>
            <person name="Brettin T."/>
        </authorList>
    </citation>
    <scope>NUCLEOTIDE SEQUENCE [LARGE SCALE GENOMIC DNA]</scope>
    <source>
        <strain>A0248</strain>
    </source>
</reference>
<accession>C3PBC1</accession>
<gene>
    <name evidence="1" type="primary">rpsD</name>
    <name type="ordered locus">BAA_4919</name>
</gene>
<evidence type="ECO:0000255" key="1">
    <source>
        <dbReference type="HAMAP-Rule" id="MF_01306"/>
    </source>
</evidence>
<evidence type="ECO:0000256" key="2">
    <source>
        <dbReference type="SAM" id="MobiDB-lite"/>
    </source>
</evidence>
<evidence type="ECO:0000305" key="3"/>
<organism>
    <name type="scientific">Bacillus anthracis (strain A0248)</name>
    <dbReference type="NCBI Taxonomy" id="592021"/>
    <lineage>
        <taxon>Bacteria</taxon>
        <taxon>Bacillati</taxon>
        <taxon>Bacillota</taxon>
        <taxon>Bacilli</taxon>
        <taxon>Bacillales</taxon>
        <taxon>Bacillaceae</taxon>
        <taxon>Bacillus</taxon>
        <taxon>Bacillus cereus group</taxon>
    </lineage>
</organism>
<name>RS4_BACAA</name>
<sequence length="200" mass="22996">MARYTGPAWKLSRRLGISLSGTGKELEKRPYAPGPHGPNQRKKLSEYGLQLQEKQKLRHMYGMTERQFRRTFDQAGKMPGKHGENFMILLEARLDNLVYRMGLARTRRAARQLVNHGHIMVDGARVDIPSYRVKPGQTISVREKSNNLVVVKEAIEVNNFVPEYLTFDADKLEATYTRHAERAELPAEINEALIVEFYSR</sequence>
<comment type="function">
    <text evidence="1">One of the primary rRNA binding proteins, it binds directly to 16S rRNA where it nucleates assembly of the body of the 30S subunit.</text>
</comment>
<comment type="function">
    <text evidence="1">With S5 and S12 plays an important role in translational accuracy.</text>
</comment>
<comment type="subunit">
    <text evidence="1">Part of the 30S ribosomal subunit. Contacts protein S5. The interaction surface between S4 and S5 is involved in control of translational fidelity.</text>
</comment>
<comment type="similarity">
    <text evidence="1">Belongs to the universal ribosomal protein uS4 family.</text>
</comment>